<evidence type="ECO:0000255" key="1">
    <source>
        <dbReference type="HAMAP-Rule" id="MF_00198"/>
    </source>
</evidence>
<organism>
    <name type="scientific">Stenotrophomonas maltophilia (strain R551-3)</name>
    <dbReference type="NCBI Taxonomy" id="391008"/>
    <lineage>
        <taxon>Bacteria</taxon>
        <taxon>Pseudomonadati</taxon>
        <taxon>Pseudomonadota</taxon>
        <taxon>Gammaproteobacteria</taxon>
        <taxon>Lysobacterales</taxon>
        <taxon>Lysobacteraceae</taxon>
        <taxon>Stenotrophomonas</taxon>
        <taxon>Stenotrophomonas maltophilia group</taxon>
    </lineage>
</organism>
<keyword id="KW-0963">Cytoplasm</keyword>
<keyword id="KW-0620">Polyamine biosynthesis</keyword>
<keyword id="KW-0745">Spermidine biosynthesis</keyword>
<keyword id="KW-0808">Transferase</keyword>
<proteinExistence type="inferred from homology"/>
<dbReference type="EC" id="2.5.1.16" evidence="1"/>
<dbReference type="EMBL" id="CP001111">
    <property type="protein sequence ID" value="ACF53468.1"/>
    <property type="molecule type" value="Genomic_DNA"/>
</dbReference>
<dbReference type="RefSeq" id="WP_012512350.1">
    <property type="nucleotide sequence ID" value="NC_011071.1"/>
</dbReference>
<dbReference type="SMR" id="B4SM23"/>
<dbReference type="STRING" id="391008.Smal_3769"/>
<dbReference type="KEGG" id="smt:Smal_3769"/>
<dbReference type="eggNOG" id="COG0421">
    <property type="taxonomic scope" value="Bacteria"/>
</dbReference>
<dbReference type="HOGENOM" id="CLU_048199_0_0_6"/>
<dbReference type="OrthoDB" id="9793120at2"/>
<dbReference type="UniPathway" id="UPA00248">
    <property type="reaction ID" value="UER00314"/>
</dbReference>
<dbReference type="Proteomes" id="UP000001867">
    <property type="component" value="Chromosome"/>
</dbReference>
<dbReference type="GO" id="GO:0005829">
    <property type="term" value="C:cytosol"/>
    <property type="evidence" value="ECO:0007669"/>
    <property type="project" value="TreeGrafter"/>
</dbReference>
<dbReference type="GO" id="GO:0004766">
    <property type="term" value="F:spermidine synthase activity"/>
    <property type="evidence" value="ECO:0007669"/>
    <property type="project" value="UniProtKB-UniRule"/>
</dbReference>
<dbReference type="GO" id="GO:0008295">
    <property type="term" value="P:spermidine biosynthetic process"/>
    <property type="evidence" value="ECO:0007669"/>
    <property type="project" value="UniProtKB-UniRule"/>
</dbReference>
<dbReference type="CDD" id="cd02440">
    <property type="entry name" value="AdoMet_MTases"/>
    <property type="match status" value="1"/>
</dbReference>
<dbReference type="Gene3D" id="2.30.140.10">
    <property type="entry name" value="Spermidine synthase, tetramerisation domain"/>
    <property type="match status" value="1"/>
</dbReference>
<dbReference type="Gene3D" id="3.40.50.150">
    <property type="entry name" value="Vaccinia Virus protein VP39"/>
    <property type="match status" value="1"/>
</dbReference>
<dbReference type="HAMAP" id="MF_00198">
    <property type="entry name" value="Spermidine_synth"/>
    <property type="match status" value="1"/>
</dbReference>
<dbReference type="InterPro" id="IPR030374">
    <property type="entry name" value="PABS"/>
</dbReference>
<dbReference type="InterPro" id="IPR030373">
    <property type="entry name" value="PABS_CS"/>
</dbReference>
<dbReference type="InterPro" id="IPR029063">
    <property type="entry name" value="SAM-dependent_MTases_sf"/>
</dbReference>
<dbReference type="InterPro" id="IPR001045">
    <property type="entry name" value="Spermi_synthase"/>
</dbReference>
<dbReference type="InterPro" id="IPR035246">
    <property type="entry name" value="Spermidine_synt_N"/>
</dbReference>
<dbReference type="InterPro" id="IPR037163">
    <property type="entry name" value="Spermidine_synt_N_sf"/>
</dbReference>
<dbReference type="NCBIfam" id="NF002010">
    <property type="entry name" value="PRK00811.1"/>
    <property type="match status" value="1"/>
</dbReference>
<dbReference type="NCBIfam" id="TIGR00417">
    <property type="entry name" value="speE"/>
    <property type="match status" value="1"/>
</dbReference>
<dbReference type="PANTHER" id="PTHR11558:SF11">
    <property type="entry name" value="SPERMIDINE SYNTHASE"/>
    <property type="match status" value="1"/>
</dbReference>
<dbReference type="PANTHER" id="PTHR11558">
    <property type="entry name" value="SPERMIDINE/SPERMINE SYNTHASE"/>
    <property type="match status" value="1"/>
</dbReference>
<dbReference type="Pfam" id="PF17284">
    <property type="entry name" value="Spermine_synt_N"/>
    <property type="match status" value="1"/>
</dbReference>
<dbReference type="Pfam" id="PF01564">
    <property type="entry name" value="Spermine_synth"/>
    <property type="match status" value="1"/>
</dbReference>
<dbReference type="SUPFAM" id="SSF53335">
    <property type="entry name" value="S-adenosyl-L-methionine-dependent methyltransferases"/>
    <property type="match status" value="1"/>
</dbReference>
<dbReference type="PROSITE" id="PS01330">
    <property type="entry name" value="PABS_1"/>
    <property type="match status" value="1"/>
</dbReference>
<dbReference type="PROSITE" id="PS51006">
    <property type="entry name" value="PABS_2"/>
    <property type="match status" value="1"/>
</dbReference>
<sequence length="283" mass="31378">MTDSNNWYIEHFERTGSAIGYRITGKLDEVQSPFQKIEIFRTTDWGNLMTIDGAIMLTSKDNFFYHEMISHPVLFTHAAPKRVVIIGGGDCGTLREVLKHKGVESVTQCDIDEQVTVMARKHFPELCDSNDDARAELLFDDGVAYMANCPAGSVDVVIVDSTDPVGPGEGLFNKAFYASCFKALKDDGILVQQSESPLMQLELINEMRTEMGKAGFGSFKTLPFPQPCYPTGWWSVTLARKGESSFDFRQADSAAKTFETLYYTAALHTGVLVTPPFVQAALK</sequence>
<gene>
    <name evidence="1" type="primary">speE</name>
    <name type="ordered locus">Smal_3769</name>
</gene>
<comment type="function">
    <text evidence="1">Catalyzes the irreversible transfer of a propylamine group from the amino donor S-adenosylmethioninamine (decarboxy-AdoMet) to putrescine (1,4-diaminobutane) to yield spermidine.</text>
</comment>
<comment type="catalytic activity">
    <reaction evidence="1">
        <text>S-adenosyl 3-(methylsulfanyl)propylamine + putrescine = S-methyl-5'-thioadenosine + spermidine + H(+)</text>
        <dbReference type="Rhea" id="RHEA:12721"/>
        <dbReference type="ChEBI" id="CHEBI:15378"/>
        <dbReference type="ChEBI" id="CHEBI:17509"/>
        <dbReference type="ChEBI" id="CHEBI:57443"/>
        <dbReference type="ChEBI" id="CHEBI:57834"/>
        <dbReference type="ChEBI" id="CHEBI:326268"/>
        <dbReference type="EC" id="2.5.1.16"/>
    </reaction>
</comment>
<comment type="pathway">
    <text evidence="1">Amine and polyamine biosynthesis; spermidine biosynthesis; spermidine from putrescine: step 1/1.</text>
</comment>
<comment type="subunit">
    <text evidence="1">Homodimer or homotetramer.</text>
</comment>
<comment type="subcellular location">
    <subcellularLocation>
        <location evidence="1">Cytoplasm</location>
    </subcellularLocation>
</comment>
<comment type="similarity">
    <text evidence="1">Belongs to the spermidine/spermine synthase family.</text>
</comment>
<accession>B4SM23</accession>
<name>SPEE_STRM5</name>
<reference key="1">
    <citation type="submission" date="2008-06" db="EMBL/GenBank/DDBJ databases">
        <title>Complete sequence of Stenotrophomonas maltophilia R551-3.</title>
        <authorList>
            <consortium name="US DOE Joint Genome Institute"/>
            <person name="Lucas S."/>
            <person name="Copeland A."/>
            <person name="Lapidus A."/>
            <person name="Glavina del Rio T."/>
            <person name="Dalin E."/>
            <person name="Tice H."/>
            <person name="Pitluck S."/>
            <person name="Chain P."/>
            <person name="Malfatti S."/>
            <person name="Shin M."/>
            <person name="Vergez L."/>
            <person name="Lang D."/>
            <person name="Schmutz J."/>
            <person name="Larimer F."/>
            <person name="Land M."/>
            <person name="Hauser L."/>
            <person name="Kyrpides N."/>
            <person name="Mikhailova N."/>
            <person name="Taghavi S."/>
            <person name="Monchy S."/>
            <person name="Newman L."/>
            <person name="Vangronsveld J."/>
            <person name="van der Lelie D."/>
            <person name="Richardson P."/>
        </authorList>
    </citation>
    <scope>NUCLEOTIDE SEQUENCE [LARGE SCALE GENOMIC DNA]</scope>
    <source>
        <strain>R551-3</strain>
    </source>
</reference>
<feature type="chain" id="PRO_1000099302" description="Polyamine aminopropyltransferase">
    <location>
        <begin position="1"/>
        <end position="283"/>
    </location>
</feature>
<feature type="domain" description="PABS" evidence="1">
    <location>
        <begin position="5"/>
        <end position="241"/>
    </location>
</feature>
<feature type="active site" description="Proton acceptor" evidence="1">
    <location>
        <position position="160"/>
    </location>
</feature>
<feature type="binding site" evidence="1">
    <location>
        <position position="35"/>
    </location>
    <ligand>
        <name>S-methyl-5'-thioadenosine</name>
        <dbReference type="ChEBI" id="CHEBI:17509"/>
    </ligand>
</feature>
<feature type="binding site" evidence="1">
    <location>
        <position position="66"/>
    </location>
    <ligand>
        <name>spermidine</name>
        <dbReference type="ChEBI" id="CHEBI:57834"/>
    </ligand>
</feature>
<feature type="binding site" evidence="1">
    <location>
        <position position="90"/>
    </location>
    <ligand>
        <name>spermidine</name>
        <dbReference type="ChEBI" id="CHEBI:57834"/>
    </ligand>
</feature>
<feature type="binding site" evidence="1">
    <location>
        <position position="110"/>
    </location>
    <ligand>
        <name>S-methyl-5'-thioadenosine</name>
        <dbReference type="ChEBI" id="CHEBI:17509"/>
    </ligand>
</feature>
<feature type="binding site" evidence="1">
    <location>
        <begin position="141"/>
        <end position="142"/>
    </location>
    <ligand>
        <name>S-methyl-5'-thioadenosine</name>
        <dbReference type="ChEBI" id="CHEBI:17509"/>
    </ligand>
</feature>
<feature type="binding site" evidence="1">
    <location>
        <begin position="160"/>
        <end position="163"/>
    </location>
    <ligand>
        <name>spermidine</name>
        <dbReference type="ChEBI" id="CHEBI:57834"/>
    </ligand>
</feature>
<feature type="binding site" evidence="1">
    <location>
        <position position="167"/>
    </location>
    <ligand>
        <name>S-methyl-5'-thioadenosine</name>
        <dbReference type="ChEBI" id="CHEBI:17509"/>
    </ligand>
</feature>
<protein>
    <recommendedName>
        <fullName evidence="1">Polyamine aminopropyltransferase</fullName>
    </recommendedName>
    <alternativeName>
        <fullName evidence="1">Putrescine aminopropyltransferase</fullName>
        <shortName evidence="1">PAPT</shortName>
    </alternativeName>
    <alternativeName>
        <fullName evidence="1">Spermidine synthase</fullName>
        <shortName evidence="1">SPDS</shortName>
        <shortName evidence="1">SPDSY</shortName>
        <ecNumber evidence="1">2.5.1.16</ecNumber>
    </alternativeName>
</protein>